<gene>
    <name type="primary">ynzF</name>
    <name type="ordered locus">BSU17480</name>
</gene>
<proteinExistence type="predicted"/>
<organism>
    <name type="scientific">Bacillus subtilis (strain 168)</name>
    <dbReference type="NCBI Taxonomy" id="224308"/>
    <lineage>
        <taxon>Bacteria</taxon>
        <taxon>Bacillati</taxon>
        <taxon>Bacillota</taxon>
        <taxon>Bacilli</taxon>
        <taxon>Bacillales</taxon>
        <taxon>Bacillaceae</taxon>
        <taxon>Bacillus</taxon>
    </lineage>
</organism>
<protein>
    <recommendedName>
        <fullName>Uncharacterized protein YnzF</fullName>
    </recommendedName>
</protein>
<keyword id="KW-1185">Reference proteome</keyword>
<reference key="1">
    <citation type="journal article" date="1997" name="Nature">
        <title>The complete genome sequence of the Gram-positive bacterium Bacillus subtilis.</title>
        <authorList>
            <person name="Kunst F."/>
            <person name="Ogasawara N."/>
            <person name="Moszer I."/>
            <person name="Albertini A.M."/>
            <person name="Alloni G."/>
            <person name="Azevedo V."/>
            <person name="Bertero M.G."/>
            <person name="Bessieres P."/>
            <person name="Bolotin A."/>
            <person name="Borchert S."/>
            <person name="Borriss R."/>
            <person name="Boursier L."/>
            <person name="Brans A."/>
            <person name="Braun M."/>
            <person name="Brignell S.C."/>
            <person name="Bron S."/>
            <person name="Brouillet S."/>
            <person name="Bruschi C.V."/>
            <person name="Caldwell B."/>
            <person name="Capuano V."/>
            <person name="Carter N.M."/>
            <person name="Choi S.-K."/>
            <person name="Codani J.-J."/>
            <person name="Connerton I.F."/>
            <person name="Cummings N.J."/>
            <person name="Daniel R.A."/>
            <person name="Denizot F."/>
            <person name="Devine K.M."/>
            <person name="Duesterhoeft A."/>
            <person name="Ehrlich S.D."/>
            <person name="Emmerson P.T."/>
            <person name="Entian K.-D."/>
            <person name="Errington J."/>
            <person name="Fabret C."/>
            <person name="Ferrari E."/>
            <person name="Foulger D."/>
            <person name="Fritz C."/>
            <person name="Fujita M."/>
            <person name="Fujita Y."/>
            <person name="Fuma S."/>
            <person name="Galizzi A."/>
            <person name="Galleron N."/>
            <person name="Ghim S.-Y."/>
            <person name="Glaser P."/>
            <person name="Goffeau A."/>
            <person name="Golightly E.J."/>
            <person name="Grandi G."/>
            <person name="Guiseppi G."/>
            <person name="Guy B.J."/>
            <person name="Haga K."/>
            <person name="Haiech J."/>
            <person name="Harwood C.R."/>
            <person name="Henaut A."/>
            <person name="Hilbert H."/>
            <person name="Holsappel S."/>
            <person name="Hosono S."/>
            <person name="Hullo M.-F."/>
            <person name="Itaya M."/>
            <person name="Jones L.-M."/>
            <person name="Joris B."/>
            <person name="Karamata D."/>
            <person name="Kasahara Y."/>
            <person name="Klaerr-Blanchard M."/>
            <person name="Klein C."/>
            <person name="Kobayashi Y."/>
            <person name="Koetter P."/>
            <person name="Koningstein G."/>
            <person name="Krogh S."/>
            <person name="Kumano M."/>
            <person name="Kurita K."/>
            <person name="Lapidus A."/>
            <person name="Lardinois S."/>
            <person name="Lauber J."/>
            <person name="Lazarevic V."/>
            <person name="Lee S.-M."/>
            <person name="Levine A."/>
            <person name="Liu H."/>
            <person name="Masuda S."/>
            <person name="Mauel C."/>
            <person name="Medigue C."/>
            <person name="Medina N."/>
            <person name="Mellado R.P."/>
            <person name="Mizuno M."/>
            <person name="Moestl D."/>
            <person name="Nakai S."/>
            <person name="Noback M."/>
            <person name="Noone D."/>
            <person name="O'Reilly M."/>
            <person name="Ogawa K."/>
            <person name="Ogiwara A."/>
            <person name="Oudega B."/>
            <person name="Park S.-H."/>
            <person name="Parro V."/>
            <person name="Pohl T.M."/>
            <person name="Portetelle D."/>
            <person name="Porwollik S."/>
            <person name="Prescott A.M."/>
            <person name="Presecan E."/>
            <person name="Pujic P."/>
            <person name="Purnelle B."/>
            <person name="Rapoport G."/>
            <person name="Rey M."/>
            <person name="Reynolds S."/>
            <person name="Rieger M."/>
            <person name="Rivolta C."/>
            <person name="Rocha E."/>
            <person name="Roche B."/>
            <person name="Rose M."/>
            <person name="Sadaie Y."/>
            <person name="Sato T."/>
            <person name="Scanlan E."/>
            <person name="Schleich S."/>
            <person name="Schroeter R."/>
            <person name="Scoffone F."/>
            <person name="Sekiguchi J."/>
            <person name="Sekowska A."/>
            <person name="Seror S.J."/>
            <person name="Serror P."/>
            <person name="Shin B.-S."/>
            <person name="Soldo B."/>
            <person name="Sorokin A."/>
            <person name="Tacconi E."/>
            <person name="Takagi T."/>
            <person name="Takahashi H."/>
            <person name="Takemaru K."/>
            <person name="Takeuchi M."/>
            <person name="Tamakoshi A."/>
            <person name="Tanaka T."/>
            <person name="Terpstra P."/>
            <person name="Tognoni A."/>
            <person name="Tosato V."/>
            <person name="Uchiyama S."/>
            <person name="Vandenbol M."/>
            <person name="Vannier F."/>
            <person name="Vassarotti A."/>
            <person name="Viari A."/>
            <person name="Wambutt R."/>
            <person name="Wedler E."/>
            <person name="Wedler H."/>
            <person name="Weitzenegger T."/>
            <person name="Winters P."/>
            <person name="Wipat A."/>
            <person name="Yamamoto H."/>
            <person name="Yamane K."/>
            <person name="Yasumoto K."/>
            <person name="Yata K."/>
            <person name="Yoshida K."/>
            <person name="Yoshikawa H.-F."/>
            <person name="Zumstein E."/>
            <person name="Yoshikawa H."/>
            <person name="Danchin A."/>
        </authorList>
    </citation>
    <scope>NUCLEOTIDE SEQUENCE [LARGE SCALE GENOMIC DNA]</scope>
    <source>
        <strain>168</strain>
    </source>
</reference>
<dbReference type="EMBL" id="AL009126">
    <property type="protein sequence ID" value="CAB13632.1"/>
    <property type="molecule type" value="Genomic_DNA"/>
</dbReference>
<dbReference type="PIR" id="H69894">
    <property type="entry name" value="H69894"/>
</dbReference>
<dbReference type="RefSeq" id="NP_389630.1">
    <property type="nucleotide sequence ID" value="NC_000964.3"/>
</dbReference>
<dbReference type="RefSeq" id="WP_003244759.1">
    <property type="nucleotide sequence ID" value="NZ_OZ025638.1"/>
</dbReference>
<dbReference type="SMR" id="O31799"/>
<dbReference type="FunCoup" id="O31799">
    <property type="interactions" value="4"/>
</dbReference>
<dbReference type="STRING" id="224308.BSU17480"/>
<dbReference type="PaxDb" id="224308-BSU17480"/>
<dbReference type="EnsemblBacteria" id="CAB13632">
    <property type="protein sequence ID" value="CAB13632"/>
    <property type="gene ID" value="BSU_17480"/>
</dbReference>
<dbReference type="GeneID" id="939642"/>
<dbReference type="KEGG" id="bsu:BSU17480"/>
<dbReference type="PATRIC" id="fig|224308.179.peg.1896"/>
<dbReference type="InParanoid" id="O31799"/>
<dbReference type="OrthoDB" id="9864149at2"/>
<dbReference type="BioCyc" id="BSUB:BSU17480-MONOMER"/>
<dbReference type="Proteomes" id="UP000001570">
    <property type="component" value="Chromosome"/>
</dbReference>
<dbReference type="Gene3D" id="1.20.1170.10">
    <property type="match status" value="1"/>
</dbReference>
<dbReference type="SUPFAM" id="SSF58100">
    <property type="entry name" value="Bacterial hemolysins"/>
    <property type="match status" value="1"/>
</dbReference>
<feature type="chain" id="PRO_0000370259" description="Uncharacterized protein YnzF">
    <location>
        <begin position="1"/>
        <end position="114"/>
    </location>
</feature>
<sequence>MWKALSQLLKKQKNQSPSDEDYIQIPELEVKVLGMLHSINIDLVNVIAQAEKSKEFIGQIEGIWHSIANQFYSLAQGFENEDINKLSADLDHAAATWEAVANKAKEFVTNSYQG</sequence>
<accession>O31799</accession>
<name>YNZF_BACSU</name>